<protein>
    <recommendedName>
        <fullName evidence="1">Polyribonucleotide nucleotidyltransferase</fullName>
        <ecNumber evidence="1">2.7.7.8</ecNumber>
    </recommendedName>
    <alternativeName>
        <fullName evidence="1">Polynucleotide phosphorylase</fullName>
        <shortName evidence="1">PNPase</shortName>
    </alternativeName>
</protein>
<proteinExistence type="inferred from homology"/>
<feature type="chain" id="PRO_1000192503" description="Polyribonucleotide nucleotidyltransferase">
    <location>
        <begin position="1"/>
        <end position="689"/>
    </location>
</feature>
<feature type="domain" description="KH" evidence="1">
    <location>
        <begin position="549"/>
        <end position="608"/>
    </location>
</feature>
<feature type="domain" description="S1 motif" evidence="1">
    <location>
        <begin position="618"/>
        <end position="686"/>
    </location>
</feature>
<feature type="binding site" evidence="1">
    <location>
        <position position="482"/>
    </location>
    <ligand>
        <name>Mg(2+)</name>
        <dbReference type="ChEBI" id="CHEBI:18420"/>
    </ligand>
</feature>
<feature type="binding site" evidence="1">
    <location>
        <position position="488"/>
    </location>
    <ligand>
        <name>Mg(2+)</name>
        <dbReference type="ChEBI" id="CHEBI:18420"/>
    </ligand>
</feature>
<evidence type="ECO:0000255" key="1">
    <source>
        <dbReference type="HAMAP-Rule" id="MF_01595"/>
    </source>
</evidence>
<sequence length="689" mass="75686">MEYFKKEVDVAGKKFIVESGKVAKQAGGSCTVRIGETVVLVTVVSLKEPKVGIDFMPLTVDYRERTYAAGKIPGGFFKRETRPRDGEVLVSRLIDRSIRPLFPEYYRNDTQISAVVLSHDGENDSEMAAILGASIALYTSDLPFTTPIASVRIGKINGQLIINPLIAEQKLSDLDLVVSGTEEALTMVEAGARELSEAEMLEALNLAGKTLKGICLFQKTLPAKTKIVVEQPQHNSLLKADIEAEAVSKAEMSVVIKEKCEREFFWDSFKKDISSRLLEKYPEELPSTIDAILEDIFYQKARDLVLNKKIRTDGRGFEEIRPITCETGVLPRVHGSSLFTRGQTQALVTVTLGSPCDMQVIDELIVEYKERFMLHYNFPGFATGEPKRDRAVSRREIGHGNLAKKALKHIMPDGEDFGYAVRIVSDILESNGSSSMASVCGGSLALFNAGVPVKSSCAGVSMGLMKEGGSYVILTDITGMEDHLGDMDFKVAGTRKGITALQMDIKILGLTTEIVAQALEQAKRGRFFILDQMDAVVSAPKNDLSNYAPRMITLTIPQNKIGELIGPGGKNIRKIQEDNNVKIDIEETGRVFISGVESDGVKSAKEYVECLTVEAEVGKIYKSRVTKIMAFGAFAEILPGKEGLIHISQLSNRHTKRVEDVVKEGDEVKVKVIEIDKQGRINLSIKAAL</sequence>
<organism>
    <name type="scientific">Endomicrobium trichonymphae</name>
    <dbReference type="NCBI Taxonomy" id="1408204"/>
    <lineage>
        <taxon>Bacteria</taxon>
        <taxon>Pseudomonadati</taxon>
        <taxon>Elusimicrobiota</taxon>
        <taxon>Endomicrobiia</taxon>
        <taxon>Endomicrobiales</taxon>
        <taxon>Endomicrobiaceae</taxon>
        <taxon>Candidatus Endomicrobiellum</taxon>
    </lineage>
</organism>
<comment type="function">
    <text evidence="1">Involved in mRNA degradation. Catalyzes the phosphorolysis of single-stranded polyribonucleotides processively in the 3'- to 5'-direction.</text>
</comment>
<comment type="catalytic activity">
    <reaction evidence="1">
        <text>RNA(n+1) + phosphate = RNA(n) + a ribonucleoside 5'-diphosphate</text>
        <dbReference type="Rhea" id="RHEA:22096"/>
        <dbReference type="Rhea" id="RHEA-COMP:14527"/>
        <dbReference type="Rhea" id="RHEA-COMP:17342"/>
        <dbReference type="ChEBI" id="CHEBI:43474"/>
        <dbReference type="ChEBI" id="CHEBI:57930"/>
        <dbReference type="ChEBI" id="CHEBI:140395"/>
        <dbReference type="EC" id="2.7.7.8"/>
    </reaction>
</comment>
<comment type="cofactor">
    <cofactor evidence="1">
        <name>Mg(2+)</name>
        <dbReference type="ChEBI" id="CHEBI:18420"/>
    </cofactor>
</comment>
<comment type="subcellular location">
    <subcellularLocation>
        <location evidence="1">Cytoplasm</location>
    </subcellularLocation>
</comment>
<comment type="similarity">
    <text evidence="1">Belongs to the polyribonucleotide nucleotidyltransferase family.</text>
</comment>
<reference key="1">
    <citation type="journal article" date="2008" name="Proc. Natl. Acad. Sci. U.S.A.">
        <title>Complete genome of the uncultured termite group 1 bacteria in a single host protist cell.</title>
        <authorList>
            <person name="Hongoh Y."/>
            <person name="Sharma V.K."/>
            <person name="Prakash T."/>
            <person name="Noda S."/>
            <person name="Taylor T.D."/>
            <person name="Kudo T."/>
            <person name="Sakaki Y."/>
            <person name="Toyoda A."/>
            <person name="Hattori M."/>
            <person name="Ohkuma M."/>
        </authorList>
    </citation>
    <scope>NUCLEOTIDE SEQUENCE [LARGE SCALE GENOMIC DNA]</scope>
</reference>
<gene>
    <name evidence="1" type="primary">pnp</name>
    <name type="ordered locus">TGRD_167</name>
</gene>
<dbReference type="EC" id="2.7.7.8" evidence="1"/>
<dbReference type="EMBL" id="AP009510">
    <property type="protein sequence ID" value="BAG13650.1"/>
    <property type="molecule type" value="Genomic_DNA"/>
</dbReference>
<dbReference type="RefSeq" id="WP_015423178.1">
    <property type="nucleotide sequence ID" value="NC_020419.1"/>
</dbReference>
<dbReference type="SMR" id="B1GZG8"/>
<dbReference type="STRING" id="471821.TGRD_167"/>
<dbReference type="KEGG" id="rsd:TGRD_167"/>
<dbReference type="PATRIC" id="fig|471821.5.peg.245"/>
<dbReference type="HOGENOM" id="CLU_004217_2_2_0"/>
<dbReference type="Proteomes" id="UP000001691">
    <property type="component" value="Chromosome"/>
</dbReference>
<dbReference type="GO" id="GO:0005829">
    <property type="term" value="C:cytosol"/>
    <property type="evidence" value="ECO:0007669"/>
    <property type="project" value="TreeGrafter"/>
</dbReference>
<dbReference type="GO" id="GO:0000175">
    <property type="term" value="F:3'-5'-RNA exonuclease activity"/>
    <property type="evidence" value="ECO:0007669"/>
    <property type="project" value="TreeGrafter"/>
</dbReference>
<dbReference type="GO" id="GO:0000287">
    <property type="term" value="F:magnesium ion binding"/>
    <property type="evidence" value="ECO:0007669"/>
    <property type="project" value="UniProtKB-UniRule"/>
</dbReference>
<dbReference type="GO" id="GO:0004654">
    <property type="term" value="F:polyribonucleotide nucleotidyltransferase activity"/>
    <property type="evidence" value="ECO:0007669"/>
    <property type="project" value="UniProtKB-UniRule"/>
</dbReference>
<dbReference type="GO" id="GO:0003723">
    <property type="term" value="F:RNA binding"/>
    <property type="evidence" value="ECO:0007669"/>
    <property type="project" value="UniProtKB-UniRule"/>
</dbReference>
<dbReference type="GO" id="GO:0006402">
    <property type="term" value="P:mRNA catabolic process"/>
    <property type="evidence" value="ECO:0007669"/>
    <property type="project" value="UniProtKB-UniRule"/>
</dbReference>
<dbReference type="GO" id="GO:0006396">
    <property type="term" value="P:RNA processing"/>
    <property type="evidence" value="ECO:0007669"/>
    <property type="project" value="InterPro"/>
</dbReference>
<dbReference type="CDD" id="cd02393">
    <property type="entry name" value="KH-I_PNPase"/>
    <property type="match status" value="1"/>
</dbReference>
<dbReference type="CDD" id="cd11363">
    <property type="entry name" value="RNase_PH_PNPase_1"/>
    <property type="match status" value="1"/>
</dbReference>
<dbReference type="CDD" id="cd11364">
    <property type="entry name" value="RNase_PH_PNPase_2"/>
    <property type="match status" value="1"/>
</dbReference>
<dbReference type="CDD" id="cd04472">
    <property type="entry name" value="S1_PNPase"/>
    <property type="match status" value="1"/>
</dbReference>
<dbReference type="FunFam" id="2.40.50.140:FF:000023">
    <property type="entry name" value="Polyribonucleotide nucleotidyltransferase"/>
    <property type="match status" value="1"/>
</dbReference>
<dbReference type="FunFam" id="3.30.1370.10:FF:000001">
    <property type="entry name" value="Polyribonucleotide nucleotidyltransferase"/>
    <property type="match status" value="1"/>
</dbReference>
<dbReference type="FunFam" id="3.30.230.70:FF:000001">
    <property type="entry name" value="Polyribonucleotide nucleotidyltransferase"/>
    <property type="match status" value="1"/>
</dbReference>
<dbReference type="FunFam" id="3.30.230.70:FF:000002">
    <property type="entry name" value="Polyribonucleotide nucleotidyltransferase"/>
    <property type="match status" value="1"/>
</dbReference>
<dbReference type="Gene3D" id="3.30.230.70">
    <property type="entry name" value="GHMP Kinase, N-terminal domain"/>
    <property type="match status" value="2"/>
</dbReference>
<dbReference type="Gene3D" id="3.30.1370.10">
    <property type="entry name" value="K Homology domain, type 1"/>
    <property type="match status" value="1"/>
</dbReference>
<dbReference type="Gene3D" id="2.40.50.140">
    <property type="entry name" value="Nucleic acid-binding proteins"/>
    <property type="match status" value="1"/>
</dbReference>
<dbReference type="HAMAP" id="MF_01595">
    <property type="entry name" value="PNPase"/>
    <property type="match status" value="1"/>
</dbReference>
<dbReference type="InterPro" id="IPR001247">
    <property type="entry name" value="ExoRNase_PH_dom1"/>
</dbReference>
<dbReference type="InterPro" id="IPR015847">
    <property type="entry name" value="ExoRNase_PH_dom2"/>
</dbReference>
<dbReference type="InterPro" id="IPR036345">
    <property type="entry name" value="ExoRNase_PH_dom2_sf"/>
</dbReference>
<dbReference type="InterPro" id="IPR004087">
    <property type="entry name" value="KH_dom"/>
</dbReference>
<dbReference type="InterPro" id="IPR004088">
    <property type="entry name" value="KH_dom_type_1"/>
</dbReference>
<dbReference type="InterPro" id="IPR036612">
    <property type="entry name" value="KH_dom_type_1_sf"/>
</dbReference>
<dbReference type="InterPro" id="IPR012340">
    <property type="entry name" value="NA-bd_OB-fold"/>
</dbReference>
<dbReference type="InterPro" id="IPR012162">
    <property type="entry name" value="PNPase"/>
</dbReference>
<dbReference type="InterPro" id="IPR027408">
    <property type="entry name" value="PNPase/RNase_PH_dom_sf"/>
</dbReference>
<dbReference type="InterPro" id="IPR015848">
    <property type="entry name" value="PNPase_PH_RNA-bd_bac/org-type"/>
</dbReference>
<dbReference type="InterPro" id="IPR036456">
    <property type="entry name" value="PNPase_PH_RNA-bd_sf"/>
</dbReference>
<dbReference type="InterPro" id="IPR020568">
    <property type="entry name" value="Ribosomal_Su5_D2-typ_SF"/>
</dbReference>
<dbReference type="InterPro" id="IPR003029">
    <property type="entry name" value="S1_domain"/>
</dbReference>
<dbReference type="NCBIfam" id="TIGR03591">
    <property type="entry name" value="polynuc_phos"/>
    <property type="match status" value="1"/>
</dbReference>
<dbReference type="NCBIfam" id="NF008805">
    <property type="entry name" value="PRK11824.1"/>
    <property type="match status" value="1"/>
</dbReference>
<dbReference type="PANTHER" id="PTHR11252">
    <property type="entry name" value="POLYRIBONUCLEOTIDE NUCLEOTIDYLTRANSFERASE"/>
    <property type="match status" value="1"/>
</dbReference>
<dbReference type="PANTHER" id="PTHR11252:SF0">
    <property type="entry name" value="POLYRIBONUCLEOTIDE NUCLEOTIDYLTRANSFERASE 1, MITOCHONDRIAL"/>
    <property type="match status" value="1"/>
</dbReference>
<dbReference type="Pfam" id="PF00013">
    <property type="entry name" value="KH_1"/>
    <property type="match status" value="1"/>
</dbReference>
<dbReference type="Pfam" id="PF03726">
    <property type="entry name" value="PNPase"/>
    <property type="match status" value="1"/>
</dbReference>
<dbReference type="Pfam" id="PF01138">
    <property type="entry name" value="RNase_PH"/>
    <property type="match status" value="2"/>
</dbReference>
<dbReference type="Pfam" id="PF03725">
    <property type="entry name" value="RNase_PH_C"/>
    <property type="match status" value="2"/>
</dbReference>
<dbReference type="Pfam" id="PF00575">
    <property type="entry name" value="S1"/>
    <property type="match status" value="1"/>
</dbReference>
<dbReference type="PIRSF" id="PIRSF005499">
    <property type="entry name" value="PNPase"/>
    <property type="match status" value="1"/>
</dbReference>
<dbReference type="SMART" id="SM00322">
    <property type="entry name" value="KH"/>
    <property type="match status" value="1"/>
</dbReference>
<dbReference type="SMART" id="SM00316">
    <property type="entry name" value="S1"/>
    <property type="match status" value="1"/>
</dbReference>
<dbReference type="SUPFAM" id="SSF54791">
    <property type="entry name" value="Eukaryotic type KH-domain (KH-domain type I)"/>
    <property type="match status" value="1"/>
</dbReference>
<dbReference type="SUPFAM" id="SSF50249">
    <property type="entry name" value="Nucleic acid-binding proteins"/>
    <property type="match status" value="1"/>
</dbReference>
<dbReference type="SUPFAM" id="SSF46915">
    <property type="entry name" value="Polynucleotide phosphorylase/guanosine pentaphosphate synthase (PNPase/GPSI), domain 3"/>
    <property type="match status" value="1"/>
</dbReference>
<dbReference type="SUPFAM" id="SSF55666">
    <property type="entry name" value="Ribonuclease PH domain 2-like"/>
    <property type="match status" value="2"/>
</dbReference>
<dbReference type="SUPFAM" id="SSF54211">
    <property type="entry name" value="Ribosomal protein S5 domain 2-like"/>
    <property type="match status" value="2"/>
</dbReference>
<dbReference type="PROSITE" id="PS50084">
    <property type="entry name" value="KH_TYPE_1"/>
    <property type="match status" value="1"/>
</dbReference>
<dbReference type="PROSITE" id="PS50126">
    <property type="entry name" value="S1"/>
    <property type="match status" value="1"/>
</dbReference>
<keyword id="KW-0963">Cytoplasm</keyword>
<keyword id="KW-0460">Magnesium</keyword>
<keyword id="KW-0479">Metal-binding</keyword>
<keyword id="KW-0548">Nucleotidyltransferase</keyword>
<keyword id="KW-0694">RNA-binding</keyword>
<keyword id="KW-0808">Transferase</keyword>
<accession>B1GZG8</accession>
<name>PNP_ENDTX</name>